<comment type="function">
    <text evidence="1">This protein is located at the 30S-50S ribosomal subunit interface and may play a role in the structure and function of the aminoacyl-tRNA binding site.</text>
</comment>
<comment type="similarity">
    <text evidence="1">Belongs to the bacterial ribosomal protein bL19 family.</text>
</comment>
<protein>
    <recommendedName>
        <fullName evidence="1">Large ribosomal subunit protein bL19</fullName>
    </recommendedName>
    <alternativeName>
        <fullName evidence="2">50S ribosomal protein L19</fullName>
    </alternativeName>
</protein>
<evidence type="ECO:0000255" key="1">
    <source>
        <dbReference type="HAMAP-Rule" id="MF_00402"/>
    </source>
</evidence>
<evidence type="ECO:0000305" key="2"/>
<organism>
    <name type="scientific">Burkholderia ambifaria (strain ATCC BAA-244 / DSM 16087 / CCUG 44356 / LMG 19182 / AMMD)</name>
    <name type="common">Burkholderia cepacia (strain AMMD)</name>
    <dbReference type="NCBI Taxonomy" id="339670"/>
    <lineage>
        <taxon>Bacteria</taxon>
        <taxon>Pseudomonadati</taxon>
        <taxon>Pseudomonadota</taxon>
        <taxon>Betaproteobacteria</taxon>
        <taxon>Burkholderiales</taxon>
        <taxon>Burkholderiaceae</taxon>
        <taxon>Burkholderia</taxon>
        <taxon>Burkholderia cepacia complex</taxon>
    </lineage>
</organism>
<keyword id="KW-0687">Ribonucleoprotein</keyword>
<keyword id="KW-0689">Ribosomal protein</keyword>
<feature type="chain" id="PRO_1000049643" description="Large ribosomal subunit protein bL19">
    <location>
        <begin position="1"/>
        <end position="130"/>
    </location>
</feature>
<reference key="1">
    <citation type="submission" date="2006-08" db="EMBL/GenBank/DDBJ databases">
        <title>Complete sequence of chromosome 1 of Burkholderia cepacia AMMD.</title>
        <authorList>
            <person name="Copeland A."/>
            <person name="Lucas S."/>
            <person name="Lapidus A."/>
            <person name="Barry K."/>
            <person name="Detter J.C."/>
            <person name="Glavina del Rio T."/>
            <person name="Hammon N."/>
            <person name="Israni S."/>
            <person name="Pitluck S."/>
            <person name="Bruce D."/>
            <person name="Chain P."/>
            <person name="Malfatti S."/>
            <person name="Shin M."/>
            <person name="Vergez L."/>
            <person name="Schmutz J."/>
            <person name="Larimer F."/>
            <person name="Land M."/>
            <person name="Hauser L."/>
            <person name="Kyrpides N."/>
            <person name="Kim E."/>
            <person name="Parke J."/>
            <person name="Coenye T."/>
            <person name="Konstantinidis K."/>
            <person name="Ramette A."/>
            <person name="Tiedje J."/>
            <person name="Richardson P."/>
        </authorList>
    </citation>
    <scope>NUCLEOTIDE SEQUENCE [LARGE SCALE GENOMIC DNA]</scope>
    <source>
        <strain>ATCC BAA-244 / DSM 16087 / CCUG 44356 / LMG 19182 / AMMD</strain>
    </source>
</reference>
<accession>Q0BH66</accession>
<proteinExistence type="inferred from homology"/>
<name>RL19_BURCM</name>
<gene>
    <name evidence="1" type="primary">rplS</name>
    <name type="ordered locus">Bamb_0948</name>
</gene>
<dbReference type="EMBL" id="CP000440">
    <property type="protein sequence ID" value="ABI86507.1"/>
    <property type="molecule type" value="Genomic_DNA"/>
</dbReference>
<dbReference type="RefSeq" id="WP_006761288.1">
    <property type="nucleotide sequence ID" value="NZ_CP009798.1"/>
</dbReference>
<dbReference type="SMR" id="Q0BH66"/>
<dbReference type="GeneID" id="93083643"/>
<dbReference type="KEGG" id="bam:Bamb_0948"/>
<dbReference type="PATRIC" id="fig|339670.21.peg.626"/>
<dbReference type="eggNOG" id="COG0335">
    <property type="taxonomic scope" value="Bacteria"/>
</dbReference>
<dbReference type="Proteomes" id="UP000000662">
    <property type="component" value="Chromosome 1"/>
</dbReference>
<dbReference type="GO" id="GO:0022625">
    <property type="term" value="C:cytosolic large ribosomal subunit"/>
    <property type="evidence" value="ECO:0007669"/>
    <property type="project" value="TreeGrafter"/>
</dbReference>
<dbReference type="GO" id="GO:0003735">
    <property type="term" value="F:structural constituent of ribosome"/>
    <property type="evidence" value="ECO:0007669"/>
    <property type="project" value="InterPro"/>
</dbReference>
<dbReference type="GO" id="GO:0006412">
    <property type="term" value="P:translation"/>
    <property type="evidence" value="ECO:0007669"/>
    <property type="project" value="UniProtKB-UniRule"/>
</dbReference>
<dbReference type="FunFam" id="2.30.30.790:FF:000001">
    <property type="entry name" value="50S ribosomal protein L19"/>
    <property type="match status" value="1"/>
</dbReference>
<dbReference type="Gene3D" id="2.30.30.790">
    <property type="match status" value="1"/>
</dbReference>
<dbReference type="HAMAP" id="MF_00402">
    <property type="entry name" value="Ribosomal_bL19"/>
    <property type="match status" value="1"/>
</dbReference>
<dbReference type="InterPro" id="IPR001857">
    <property type="entry name" value="Ribosomal_bL19"/>
</dbReference>
<dbReference type="InterPro" id="IPR018257">
    <property type="entry name" value="Ribosomal_bL19_CS"/>
</dbReference>
<dbReference type="InterPro" id="IPR038657">
    <property type="entry name" value="Ribosomal_bL19_sf"/>
</dbReference>
<dbReference type="InterPro" id="IPR008991">
    <property type="entry name" value="Translation_prot_SH3-like_sf"/>
</dbReference>
<dbReference type="NCBIfam" id="TIGR01024">
    <property type="entry name" value="rplS_bact"/>
    <property type="match status" value="1"/>
</dbReference>
<dbReference type="PANTHER" id="PTHR15680:SF9">
    <property type="entry name" value="LARGE RIBOSOMAL SUBUNIT PROTEIN BL19M"/>
    <property type="match status" value="1"/>
</dbReference>
<dbReference type="PANTHER" id="PTHR15680">
    <property type="entry name" value="RIBOSOMAL PROTEIN L19"/>
    <property type="match status" value="1"/>
</dbReference>
<dbReference type="Pfam" id="PF01245">
    <property type="entry name" value="Ribosomal_L19"/>
    <property type="match status" value="1"/>
</dbReference>
<dbReference type="PIRSF" id="PIRSF002191">
    <property type="entry name" value="Ribosomal_L19"/>
    <property type="match status" value="1"/>
</dbReference>
<dbReference type="PRINTS" id="PR00061">
    <property type="entry name" value="RIBOSOMALL19"/>
</dbReference>
<dbReference type="SUPFAM" id="SSF50104">
    <property type="entry name" value="Translation proteins SH3-like domain"/>
    <property type="match status" value="1"/>
</dbReference>
<dbReference type="PROSITE" id="PS01015">
    <property type="entry name" value="RIBOSOMAL_L19"/>
    <property type="match status" value="1"/>
</dbReference>
<sequence length="130" mass="14546">MNLIAKLEQEEIERALAGKTIPEFAPGDTVIVNVNVVEGTRKRVQAYEGVVIAIRNRGLNSNFIVRKISSGEGVERTFQTYSPLLASIVVKRRGDVRRAKLYYLRERSGKSARIKEKLVSKDRTAAASQE</sequence>